<protein>
    <recommendedName>
        <fullName evidence="1">Regulator of telomere elongation helicase 1 homolog</fullName>
        <ecNumber evidence="1">5.6.2.-</ecNumber>
    </recommendedName>
</protein>
<comment type="function">
    <text evidence="1 5">A probable ATP-dependent DNA helicase implicated in DNA repair and the maintenance of genomic stability. Acts as an anti-recombinase to counteract toxic recombination and limit crossover during meiosis. Regulates meiotic recombination and crossover homeostasis by physically dissociating strand invasion events and thereby promotes noncrossover repair by meiotic synthesis dependent strand annealing (SDSA) as well as disassembly of D loop recombination intermediates (By similarity). In male germline stem cells (GSCs), plays a role in GSCs maintenance during larval germline development by modulating the expression of genes such as Stat92E and preventing DNA damage-induced checkpoint activation (PubMed:34644293). May play a role in female germline stem cell maintenance (PubMed:34644293).</text>
</comment>
<comment type="catalytic activity">
    <reaction evidence="1">
        <text>ATP + H2O = ADP + phosphate + H(+)</text>
        <dbReference type="Rhea" id="RHEA:13065"/>
        <dbReference type="ChEBI" id="CHEBI:15377"/>
        <dbReference type="ChEBI" id="CHEBI:15378"/>
        <dbReference type="ChEBI" id="CHEBI:30616"/>
        <dbReference type="ChEBI" id="CHEBI:43474"/>
        <dbReference type="ChEBI" id="CHEBI:456216"/>
    </reaction>
</comment>
<comment type="subcellular location">
    <subcellularLocation>
        <location evidence="1 5">Nucleus</location>
    </subcellularLocation>
    <subcellularLocation>
        <location evidence="5">Chromosome</location>
    </subcellularLocation>
</comment>
<comment type="tissue specificity">
    <text evidence="5">Expressed in both male germline and somatic cells (at protein level) (PubMed:34644293). Expressed in ovarian germline stem cells (at protein level) (PubMed:34644293). Expressed in adult testes (at protein level) (PubMed:34644293). Expressed in the germarium including germline stem cells (PubMed:34644293).</text>
</comment>
<comment type="disruption phenotype">
    <text evidence="5">In males, RNAi-mediated knockdown in germ cells results in loss of male germline stem cells (GSCs) at day 14, appearance of branched fusomes and down regulation of a number of genes including Stat92E expression in adult testes (PubMed:34644293). In females, RNAi-mediated knockdown in germ cells results in a decrease in germline stem cells in the germaria (PubMed:34644293). RNAi-mediated knockdown in somatic cells or in differentiating spermatogonia does not affect GSC number in larval and adult testes or female germaria (PubMed:34644293). In the germline, simultaneous RNAi-mediated knockdown of Rtel1 and grp results in partial rescue of loss of germline stem cell (PubMed:34644293). In the germline, RNAi-mediated knockdown of Rtel1 in a lok mutant background results in partial rescue of loss of germline stem cell, including restored levels of Stat92E expression (PubMed:34644293).</text>
</comment>
<comment type="similarity">
    <text evidence="1">Belongs to the helicase family. RAD3/XPD subfamily.</text>
</comment>
<sequence>MPESLIAGIPVHFPFEPYPVQRAYMEKVIHCLRDGTNGVLESPTGTGKTLSLLCSSLAWIRTRQSEHQKQMVKMEKADFSGLGGGAPGGDLSELAKTMGRANNWGVPKVIYASRTHSQLTQAMRELKRTAYANMRSVVLGSRDQLCIHPEVMREQGNSNKTNMCKLRVHSKTCSFQMRVESRKDHPDLRGPTIMDIEDLVKVGQRLKICPYFASRELVPQADITFMPYNYLLDPKARKANKIELGNTIVILDEAHNIEKICEESASVQIKSSDVAMAIEDVTHIMQVFASGESQDMAGDEPKDFTLDDLTLLKEMLLELEKAIDAIVVDNAVDGTTFPASMMYELLGKANFTYGNVATIVSLLDKLVQYLLVASQQMSIRKGGTFTLLSDLLTIVFANKEDVMSKVYASFKVHVLVEESKQGHGKQQGAKQQGGWLGKGTIAAATGLSKVAKIINFWCFNPGFGMEQLLNTQVRSVILTSGTLAPLKPLIAELAIPVAQHLENPHIVDQSQVYVKIIGTGPDRQQLISNYANRDNPKYISSLGQTILNVARIVPDGLLVFFPSYPMLNKCVDAWQASGLWADISCKKPIFLEPRSKDQFTSTMEEFYQAIRDSKGAVFMAVCRGKVSEGLDFADRNGRAVIITGLPFPPLKDPKVILKRRYLEANRTRENQLLSGQEWYNLDATRAVNQAIGRVIRHRNDYGAILLCDSRFKDASQVQQLSKWIRGHLGDRPQCSPFGPIVRELRQFFKNAEANMKLPDERETDSPLETVCKTEDEPLAAIPKVKREPGSNATFKSANESAIKVEMANSIKTWTPADYASAAGHKLGGAAPNAMDFMSRLDSNVSSIDFNCCTDSKSGSSGLVKIHKRERSSPTAPESSSQVTKKRYKLVENIKVEPSSSQAKEAPEERAAFLRELRSLVTQDQFRRFGKALLEYKNGTYESFQALMAILLDVLSAPKVRYMLVGMRKYLKNEHKDEFDRRVGNL</sequence>
<reference key="1">
    <citation type="journal article" date="2000" name="Science">
        <title>The genome sequence of Drosophila melanogaster.</title>
        <authorList>
            <person name="Adams M.D."/>
            <person name="Celniker S.E."/>
            <person name="Holt R.A."/>
            <person name="Evans C.A."/>
            <person name="Gocayne J.D."/>
            <person name="Amanatides P.G."/>
            <person name="Scherer S.E."/>
            <person name="Li P.W."/>
            <person name="Hoskins R.A."/>
            <person name="Galle R.F."/>
            <person name="George R.A."/>
            <person name="Lewis S.E."/>
            <person name="Richards S."/>
            <person name="Ashburner M."/>
            <person name="Henderson S.N."/>
            <person name="Sutton G.G."/>
            <person name="Wortman J.R."/>
            <person name="Yandell M.D."/>
            <person name="Zhang Q."/>
            <person name="Chen L.X."/>
            <person name="Brandon R.C."/>
            <person name="Rogers Y.-H.C."/>
            <person name="Blazej R.G."/>
            <person name="Champe M."/>
            <person name="Pfeiffer B.D."/>
            <person name="Wan K.H."/>
            <person name="Doyle C."/>
            <person name="Baxter E.G."/>
            <person name="Helt G."/>
            <person name="Nelson C.R."/>
            <person name="Miklos G.L.G."/>
            <person name="Abril J.F."/>
            <person name="Agbayani A."/>
            <person name="An H.-J."/>
            <person name="Andrews-Pfannkoch C."/>
            <person name="Baldwin D."/>
            <person name="Ballew R.M."/>
            <person name="Basu A."/>
            <person name="Baxendale J."/>
            <person name="Bayraktaroglu L."/>
            <person name="Beasley E.M."/>
            <person name="Beeson K.Y."/>
            <person name="Benos P.V."/>
            <person name="Berman B.P."/>
            <person name="Bhandari D."/>
            <person name="Bolshakov S."/>
            <person name="Borkova D."/>
            <person name="Botchan M.R."/>
            <person name="Bouck J."/>
            <person name="Brokstein P."/>
            <person name="Brottier P."/>
            <person name="Burtis K.C."/>
            <person name="Busam D.A."/>
            <person name="Butler H."/>
            <person name="Cadieu E."/>
            <person name="Center A."/>
            <person name="Chandra I."/>
            <person name="Cherry J.M."/>
            <person name="Cawley S."/>
            <person name="Dahlke C."/>
            <person name="Davenport L.B."/>
            <person name="Davies P."/>
            <person name="de Pablos B."/>
            <person name="Delcher A."/>
            <person name="Deng Z."/>
            <person name="Mays A.D."/>
            <person name="Dew I."/>
            <person name="Dietz S.M."/>
            <person name="Dodson K."/>
            <person name="Doup L.E."/>
            <person name="Downes M."/>
            <person name="Dugan-Rocha S."/>
            <person name="Dunkov B.C."/>
            <person name="Dunn P."/>
            <person name="Durbin K.J."/>
            <person name="Evangelista C.C."/>
            <person name="Ferraz C."/>
            <person name="Ferriera S."/>
            <person name="Fleischmann W."/>
            <person name="Fosler C."/>
            <person name="Gabrielian A.E."/>
            <person name="Garg N.S."/>
            <person name="Gelbart W.M."/>
            <person name="Glasser K."/>
            <person name="Glodek A."/>
            <person name="Gong F."/>
            <person name="Gorrell J.H."/>
            <person name="Gu Z."/>
            <person name="Guan P."/>
            <person name="Harris M."/>
            <person name="Harris N.L."/>
            <person name="Harvey D.A."/>
            <person name="Heiman T.J."/>
            <person name="Hernandez J.R."/>
            <person name="Houck J."/>
            <person name="Hostin D."/>
            <person name="Houston K.A."/>
            <person name="Howland T.J."/>
            <person name="Wei M.-H."/>
            <person name="Ibegwam C."/>
            <person name="Jalali M."/>
            <person name="Kalush F."/>
            <person name="Karpen G.H."/>
            <person name="Ke Z."/>
            <person name="Kennison J.A."/>
            <person name="Ketchum K.A."/>
            <person name="Kimmel B.E."/>
            <person name="Kodira C.D."/>
            <person name="Kraft C.L."/>
            <person name="Kravitz S."/>
            <person name="Kulp D."/>
            <person name="Lai Z."/>
            <person name="Lasko P."/>
            <person name="Lei Y."/>
            <person name="Levitsky A.A."/>
            <person name="Li J.H."/>
            <person name="Li Z."/>
            <person name="Liang Y."/>
            <person name="Lin X."/>
            <person name="Liu X."/>
            <person name="Mattei B."/>
            <person name="McIntosh T.C."/>
            <person name="McLeod M.P."/>
            <person name="McPherson D."/>
            <person name="Merkulov G."/>
            <person name="Milshina N.V."/>
            <person name="Mobarry C."/>
            <person name="Morris J."/>
            <person name="Moshrefi A."/>
            <person name="Mount S.M."/>
            <person name="Moy M."/>
            <person name="Murphy B."/>
            <person name="Murphy L."/>
            <person name="Muzny D.M."/>
            <person name="Nelson D.L."/>
            <person name="Nelson D.R."/>
            <person name="Nelson K.A."/>
            <person name="Nixon K."/>
            <person name="Nusskern D.R."/>
            <person name="Pacleb J.M."/>
            <person name="Palazzolo M."/>
            <person name="Pittman G.S."/>
            <person name="Pan S."/>
            <person name="Pollard J."/>
            <person name="Puri V."/>
            <person name="Reese M.G."/>
            <person name="Reinert K."/>
            <person name="Remington K."/>
            <person name="Saunders R.D.C."/>
            <person name="Scheeler F."/>
            <person name="Shen H."/>
            <person name="Shue B.C."/>
            <person name="Siden-Kiamos I."/>
            <person name="Simpson M."/>
            <person name="Skupski M.P."/>
            <person name="Smith T.J."/>
            <person name="Spier E."/>
            <person name="Spradling A.C."/>
            <person name="Stapleton M."/>
            <person name="Strong R."/>
            <person name="Sun E."/>
            <person name="Svirskas R."/>
            <person name="Tector C."/>
            <person name="Turner R."/>
            <person name="Venter E."/>
            <person name="Wang A.H."/>
            <person name="Wang X."/>
            <person name="Wang Z.-Y."/>
            <person name="Wassarman D.A."/>
            <person name="Weinstock G.M."/>
            <person name="Weissenbach J."/>
            <person name="Williams S.M."/>
            <person name="Woodage T."/>
            <person name="Worley K.C."/>
            <person name="Wu D."/>
            <person name="Yang S."/>
            <person name="Yao Q.A."/>
            <person name="Ye J."/>
            <person name="Yeh R.-F."/>
            <person name="Zaveri J.S."/>
            <person name="Zhan M."/>
            <person name="Zhang G."/>
            <person name="Zhao Q."/>
            <person name="Zheng L."/>
            <person name="Zheng X.H."/>
            <person name="Zhong F.N."/>
            <person name="Zhong W."/>
            <person name="Zhou X."/>
            <person name="Zhu S.C."/>
            <person name="Zhu X."/>
            <person name="Smith H.O."/>
            <person name="Gibbs R.A."/>
            <person name="Myers E.W."/>
            <person name="Rubin G.M."/>
            <person name="Venter J.C."/>
        </authorList>
    </citation>
    <scope>NUCLEOTIDE SEQUENCE [LARGE SCALE GENOMIC DNA]</scope>
    <source>
        <strain>Berkeley</strain>
    </source>
</reference>
<reference key="2">
    <citation type="journal article" date="2002" name="Genome Biol.">
        <title>Annotation of the Drosophila melanogaster euchromatic genome: a systematic review.</title>
        <authorList>
            <person name="Misra S."/>
            <person name="Crosby M.A."/>
            <person name="Mungall C.J."/>
            <person name="Matthews B.B."/>
            <person name="Campbell K.S."/>
            <person name="Hradecky P."/>
            <person name="Huang Y."/>
            <person name="Kaminker J.S."/>
            <person name="Millburn G.H."/>
            <person name="Prochnik S.E."/>
            <person name="Smith C.D."/>
            <person name="Tupy J.L."/>
            <person name="Whitfield E.J."/>
            <person name="Bayraktaroglu L."/>
            <person name="Berman B.P."/>
            <person name="Bettencourt B.R."/>
            <person name="Celniker S.E."/>
            <person name="de Grey A.D.N.J."/>
            <person name="Drysdale R.A."/>
            <person name="Harris N.L."/>
            <person name="Richter J."/>
            <person name="Russo S."/>
            <person name="Schroeder A.J."/>
            <person name="Shu S.Q."/>
            <person name="Stapleton M."/>
            <person name="Yamada C."/>
            <person name="Ashburner M."/>
            <person name="Gelbart W.M."/>
            <person name="Rubin G.M."/>
            <person name="Lewis S.E."/>
        </authorList>
    </citation>
    <scope>GENOME REANNOTATION</scope>
    <source>
        <strain>Berkeley</strain>
    </source>
</reference>
<reference key="3">
    <citation type="submission" date="2005-03" db="EMBL/GenBank/DDBJ databases">
        <authorList>
            <person name="Stapleton M."/>
            <person name="Carlson J.W."/>
            <person name="Chavez C."/>
            <person name="Frise E."/>
            <person name="George R.A."/>
            <person name="Pacleb J.M."/>
            <person name="Park S."/>
            <person name="Wan K.H."/>
            <person name="Yu C."/>
            <person name="Rubin G.M."/>
            <person name="Celniker S.E."/>
        </authorList>
    </citation>
    <scope>NUCLEOTIDE SEQUENCE [LARGE SCALE MRNA]</scope>
    <source>
        <strain>Berkeley</strain>
        <tissue>Embryo</tissue>
    </source>
</reference>
<reference key="4">
    <citation type="journal article" date="2007" name="Genome Res.">
        <title>Hitchhiking effects of recurrent beneficial amino acid substitutions in the Drosophila melanogaster genome.</title>
        <authorList>
            <person name="Andolfatto P."/>
        </authorList>
    </citation>
    <scope>NUCLEOTIDE SEQUENCE [GENOMIC DNA] OF 71-305</scope>
    <scope>VARIANTS ASP-81; THR-95 AND GLN-294 DEL</scope>
    <source>
        <strain>ZW104</strain>
        <strain>ZW106</strain>
        <strain>ZW109</strain>
        <strain>ZW122</strain>
        <strain>ZW123</strain>
        <strain>ZW133</strain>
        <strain>ZW136</strain>
        <strain>ZW139</strain>
        <strain>ZW140</strain>
        <strain>ZW141</strain>
        <strain>ZW142</strain>
        <strain>ZW143</strain>
    </source>
</reference>
<reference key="5">
    <citation type="journal article" date="2008" name="J. Proteome Res.">
        <title>Phosphoproteome analysis of Drosophila melanogaster embryos.</title>
        <authorList>
            <person name="Zhai B."/>
            <person name="Villen J."/>
            <person name="Beausoleil S.A."/>
            <person name="Mintseris J."/>
            <person name="Gygi S.P."/>
        </authorList>
    </citation>
    <scope>PHOSPHORYLATION [LARGE SCALE ANALYSIS] AT THR-874</scope>
    <scope>IDENTIFICATION BY MASS SPECTROMETRY</scope>
    <source>
        <tissue>Embryo</tissue>
    </source>
</reference>
<reference key="6">
    <citation type="journal article" date="2021" name="PLoS Genet.">
        <title>dRTEL1 is essential for the maintenance of Drosophila male germline stem cells.</title>
        <authorList>
            <person name="Yang Y."/>
            <person name="Kong R."/>
            <person name="Goh F.G."/>
            <person name="Somers W.G."/>
            <person name="Hime G.R."/>
            <person name="Li Z."/>
            <person name="Cai Y."/>
        </authorList>
    </citation>
    <scope>FUNCTION</scope>
    <scope>SUBCELLULAR LOCATION</scope>
    <scope>TISSUE SPECIFICITY</scope>
    <scope>DISRUPTION PHENOTYPE</scope>
</reference>
<accession>Q9W484</accession>
<accession>A9YIV5</accession>
<accession>A9YIV6</accession>
<accession>A9YIW4</accession>
<evidence type="ECO:0000255" key="1">
    <source>
        <dbReference type="HAMAP-Rule" id="MF_03065"/>
    </source>
</evidence>
<evidence type="ECO:0000256" key="2">
    <source>
        <dbReference type="SAM" id="MobiDB-lite"/>
    </source>
</evidence>
<evidence type="ECO:0000269" key="3">
    <source>
    </source>
</evidence>
<evidence type="ECO:0000269" key="4">
    <source>
    </source>
</evidence>
<evidence type="ECO:0000269" key="5">
    <source>
    </source>
</evidence>
<evidence type="ECO:0000303" key="6">
    <source>
    </source>
</evidence>
<evidence type="ECO:0000312" key="7">
    <source>
        <dbReference type="FlyBase" id="FBgn0029798"/>
    </source>
</evidence>
<name>RTEL1_DROME</name>
<keyword id="KW-0004">4Fe-4S</keyword>
<keyword id="KW-0067">ATP-binding</keyword>
<keyword id="KW-0158">Chromosome</keyword>
<keyword id="KW-0227">DNA damage</keyword>
<keyword id="KW-0234">DNA repair</keyword>
<keyword id="KW-0238">DNA-binding</keyword>
<keyword id="KW-0347">Helicase</keyword>
<keyword id="KW-0378">Hydrolase</keyword>
<keyword id="KW-0408">Iron</keyword>
<keyword id="KW-0411">Iron-sulfur</keyword>
<keyword id="KW-0413">Isomerase</keyword>
<keyword id="KW-0479">Metal-binding</keyword>
<keyword id="KW-0547">Nucleotide-binding</keyword>
<keyword id="KW-0539">Nucleus</keyword>
<keyword id="KW-0597">Phosphoprotein</keyword>
<keyword id="KW-1185">Reference proteome</keyword>
<proteinExistence type="evidence at protein level"/>
<dbReference type="EC" id="5.6.2.-" evidence="1"/>
<dbReference type="EMBL" id="AE014298">
    <property type="protein sequence ID" value="AAF46074.1"/>
    <property type="molecule type" value="Genomic_DNA"/>
</dbReference>
<dbReference type="EMBL" id="BT021290">
    <property type="protein sequence ID" value="AAX33438.1"/>
    <property type="molecule type" value="mRNA"/>
</dbReference>
<dbReference type="EMBL" id="EU217688">
    <property type="protein sequence ID" value="ABW92607.1"/>
    <property type="molecule type" value="Genomic_DNA"/>
</dbReference>
<dbReference type="EMBL" id="EU217689">
    <property type="protein sequence ID" value="ABW92608.1"/>
    <property type="molecule type" value="Genomic_DNA"/>
</dbReference>
<dbReference type="EMBL" id="EU217690">
    <property type="protein sequence ID" value="ABW92609.1"/>
    <property type="molecule type" value="Genomic_DNA"/>
</dbReference>
<dbReference type="EMBL" id="EU217691">
    <property type="protein sequence ID" value="ABW92610.1"/>
    <property type="molecule type" value="Genomic_DNA"/>
</dbReference>
<dbReference type="EMBL" id="EU217692">
    <property type="protein sequence ID" value="ABW92611.1"/>
    <property type="molecule type" value="Genomic_DNA"/>
</dbReference>
<dbReference type="EMBL" id="EU217693">
    <property type="protein sequence ID" value="ABW92612.1"/>
    <property type="molecule type" value="Genomic_DNA"/>
</dbReference>
<dbReference type="EMBL" id="EU217694">
    <property type="protein sequence ID" value="ABW92613.1"/>
    <property type="molecule type" value="Genomic_DNA"/>
</dbReference>
<dbReference type="EMBL" id="EU217695">
    <property type="protein sequence ID" value="ABW92614.1"/>
    <property type="molecule type" value="Genomic_DNA"/>
</dbReference>
<dbReference type="EMBL" id="EU217696">
    <property type="protein sequence ID" value="ABW92615.1"/>
    <property type="molecule type" value="Genomic_DNA"/>
</dbReference>
<dbReference type="EMBL" id="EU217697">
    <property type="protein sequence ID" value="ABW92616.1"/>
    <property type="molecule type" value="Genomic_DNA"/>
</dbReference>
<dbReference type="EMBL" id="EU217698">
    <property type="protein sequence ID" value="ABW92617.1"/>
    <property type="molecule type" value="Genomic_DNA"/>
</dbReference>
<dbReference type="EMBL" id="EU217699">
    <property type="protein sequence ID" value="ABW92618.1"/>
    <property type="molecule type" value="Genomic_DNA"/>
</dbReference>
<dbReference type="RefSeq" id="NP_001259262.1">
    <property type="nucleotide sequence ID" value="NM_001272333.1"/>
</dbReference>
<dbReference type="RefSeq" id="NP_572254.1">
    <property type="nucleotide sequence ID" value="NM_132026.2"/>
</dbReference>
<dbReference type="SMR" id="Q9W484"/>
<dbReference type="BioGRID" id="57997">
    <property type="interactions" value="5"/>
</dbReference>
<dbReference type="FunCoup" id="Q9W484">
    <property type="interactions" value="1917"/>
</dbReference>
<dbReference type="IntAct" id="Q9W484">
    <property type="interactions" value="7"/>
</dbReference>
<dbReference type="STRING" id="7227.FBpp0304672"/>
<dbReference type="iPTMnet" id="Q9W484"/>
<dbReference type="PaxDb" id="7227-FBpp0304672"/>
<dbReference type="EnsemblMetazoa" id="FBtr0070807">
    <property type="protein sequence ID" value="FBpp0070773"/>
    <property type="gene ID" value="FBgn0029798"/>
</dbReference>
<dbReference type="EnsemblMetazoa" id="FBtr0332398">
    <property type="protein sequence ID" value="FBpp0304672"/>
    <property type="gene ID" value="FBgn0029798"/>
</dbReference>
<dbReference type="GeneID" id="31497"/>
<dbReference type="KEGG" id="dme:Dmel_CG4078"/>
<dbReference type="UCSC" id="CG4078-RA">
    <property type="organism name" value="d. melanogaster"/>
</dbReference>
<dbReference type="AGR" id="FB:FBgn0029798"/>
<dbReference type="CTD" id="51750"/>
<dbReference type="FlyBase" id="FBgn0029798">
    <property type="gene designation" value="Rtel1"/>
</dbReference>
<dbReference type="VEuPathDB" id="VectorBase:FBgn0029798"/>
<dbReference type="eggNOG" id="KOG1132">
    <property type="taxonomic scope" value="Eukaryota"/>
</dbReference>
<dbReference type="GeneTree" id="ENSGT00950000182970"/>
<dbReference type="HOGENOM" id="CLU_006515_4_0_1"/>
<dbReference type="InParanoid" id="Q9W484"/>
<dbReference type="OMA" id="NCATIVA"/>
<dbReference type="OrthoDB" id="19182at2759"/>
<dbReference type="PhylomeDB" id="Q9W484"/>
<dbReference type="BioGRID-ORCS" id="31497">
    <property type="hits" value="1 hit in 3 CRISPR screens"/>
</dbReference>
<dbReference type="GenomeRNAi" id="31497"/>
<dbReference type="PRO" id="PR:Q9W484"/>
<dbReference type="Proteomes" id="UP000000803">
    <property type="component" value="Chromosome X"/>
</dbReference>
<dbReference type="Bgee" id="FBgn0029798">
    <property type="expression patterns" value="Expressed in gastric caecum (Drosophila) and 46 other cell types or tissues"/>
</dbReference>
<dbReference type="ExpressionAtlas" id="Q9W484">
    <property type="expression patterns" value="baseline and differential"/>
</dbReference>
<dbReference type="GO" id="GO:0005694">
    <property type="term" value="C:chromosome"/>
    <property type="evidence" value="ECO:0007669"/>
    <property type="project" value="UniProtKB-SubCell"/>
</dbReference>
<dbReference type="GO" id="GO:0005634">
    <property type="term" value="C:nucleus"/>
    <property type="evidence" value="ECO:0000314"/>
    <property type="project" value="FlyBase"/>
</dbReference>
<dbReference type="GO" id="GO:0051539">
    <property type="term" value="F:4 iron, 4 sulfur cluster binding"/>
    <property type="evidence" value="ECO:0007669"/>
    <property type="project" value="UniProtKB-UniRule"/>
</dbReference>
<dbReference type="GO" id="GO:0005524">
    <property type="term" value="F:ATP binding"/>
    <property type="evidence" value="ECO:0000250"/>
    <property type="project" value="UniProtKB"/>
</dbReference>
<dbReference type="GO" id="GO:0016887">
    <property type="term" value="F:ATP hydrolysis activity"/>
    <property type="evidence" value="ECO:0007669"/>
    <property type="project" value="RHEA"/>
</dbReference>
<dbReference type="GO" id="GO:0003682">
    <property type="term" value="F:chromatin binding"/>
    <property type="evidence" value="ECO:0000314"/>
    <property type="project" value="FlyBase"/>
</dbReference>
<dbReference type="GO" id="GO:0003677">
    <property type="term" value="F:DNA binding"/>
    <property type="evidence" value="ECO:0007669"/>
    <property type="project" value="UniProtKB-UniRule"/>
</dbReference>
<dbReference type="GO" id="GO:0003678">
    <property type="term" value="F:DNA helicase activity"/>
    <property type="evidence" value="ECO:0000250"/>
    <property type="project" value="UniProtKB"/>
</dbReference>
<dbReference type="GO" id="GO:0070182">
    <property type="term" value="F:DNA polymerase binding"/>
    <property type="evidence" value="ECO:0000318"/>
    <property type="project" value="GO_Central"/>
</dbReference>
<dbReference type="GO" id="GO:0046872">
    <property type="term" value="F:metal ion binding"/>
    <property type="evidence" value="ECO:0007669"/>
    <property type="project" value="UniProtKB-UniRule"/>
</dbReference>
<dbReference type="GO" id="GO:0006974">
    <property type="term" value="P:DNA damage response"/>
    <property type="evidence" value="ECO:0000315"/>
    <property type="project" value="FlyBase"/>
</dbReference>
<dbReference type="GO" id="GO:0006310">
    <property type="term" value="P:DNA recombination"/>
    <property type="evidence" value="ECO:0007669"/>
    <property type="project" value="InterPro"/>
</dbReference>
<dbReference type="GO" id="GO:0006281">
    <property type="term" value="P:DNA repair"/>
    <property type="evidence" value="ECO:0007669"/>
    <property type="project" value="UniProtKB-UniRule"/>
</dbReference>
<dbReference type="GO" id="GO:0006260">
    <property type="term" value="P:DNA replication"/>
    <property type="evidence" value="ECO:0007669"/>
    <property type="project" value="InterPro"/>
</dbReference>
<dbReference type="GO" id="GO:0036098">
    <property type="term" value="P:male germ-line stem cell population maintenance"/>
    <property type="evidence" value="ECO:0000315"/>
    <property type="project" value="FlyBase"/>
</dbReference>
<dbReference type="GO" id="GO:0045910">
    <property type="term" value="P:negative regulation of DNA recombination"/>
    <property type="evidence" value="ECO:0000318"/>
    <property type="project" value="GO_Central"/>
</dbReference>
<dbReference type="GO" id="GO:1904430">
    <property type="term" value="P:negative regulation of t-circle formation"/>
    <property type="evidence" value="ECO:0000318"/>
    <property type="project" value="GO_Central"/>
</dbReference>
<dbReference type="GO" id="GO:0010569">
    <property type="term" value="P:regulation of double-strand break repair via homologous recombination"/>
    <property type="evidence" value="ECO:0000250"/>
    <property type="project" value="UniProtKB"/>
</dbReference>
<dbReference type="GO" id="GO:0090657">
    <property type="term" value="P:telomeric loop disassembly"/>
    <property type="evidence" value="ECO:0000318"/>
    <property type="project" value="GO_Central"/>
</dbReference>
<dbReference type="CDD" id="cd17970">
    <property type="entry name" value="DEAHc_FancJ"/>
    <property type="match status" value="1"/>
</dbReference>
<dbReference type="CDD" id="cd13932">
    <property type="entry name" value="HN_RTEL1"/>
    <property type="match status" value="1"/>
</dbReference>
<dbReference type="CDD" id="cd18788">
    <property type="entry name" value="SF2_C_XPD"/>
    <property type="match status" value="1"/>
</dbReference>
<dbReference type="FunFam" id="3.40.50.300:FF:000431">
    <property type="entry name" value="Regulator of telomere elongation helicase 1"/>
    <property type="match status" value="1"/>
</dbReference>
<dbReference type="FunFam" id="3.40.50.300:FF:000691">
    <property type="entry name" value="Regulator of telomere elongation helicase 1"/>
    <property type="match status" value="1"/>
</dbReference>
<dbReference type="FunFam" id="1.20.1160.20:FF:000011">
    <property type="entry name" value="Regulator of telomere elongation helicase 1 homolog"/>
    <property type="match status" value="1"/>
</dbReference>
<dbReference type="Gene3D" id="1.20.1160.20">
    <property type="match status" value="1"/>
</dbReference>
<dbReference type="Gene3D" id="3.40.50.300">
    <property type="entry name" value="P-loop containing nucleotide triphosphate hydrolases"/>
    <property type="match status" value="2"/>
</dbReference>
<dbReference type="HAMAP" id="MF_03065">
    <property type="entry name" value="RTEL1"/>
    <property type="match status" value="1"/>
</dbReference>
<dbReference type="InterPro" id="IPR006555">
    <property type="entry name" value="ATP-dep_Helicase_C"/>
</dbReference>
<dbReference type="InterPro" id="IPR045028">
    <property type="entry name" value="DinG/Rad3-like"/>
</dbReference>
<dbReference type="InterPro" id="IPR014013">
    <property type="entry name" value="Helic_SF1/SF2_ATP-bd_DinG/Rad3"/>
</dbReference>
<dbReference type="InterPro" id="IPR006554">
    <property type="entry name" value="Helicase-like_DEXD_c2"/>
</dbReference>
<dbReference type="InterPro" id="IPR049909">
    <property type="entry name" value="HHD_RTEL1"/>
</dbReference>
<dbReference type="InterPro" id="IPR027417">
    <property type="entry name" value="P-loop_NTPase"/>
</dbReference>
<dbReference type="InterPro" id="IPR010614">
    <property type="entry name" value="RAD3-like_helicase_DEAD"/>
</dbReference>
<dbReference type="InterPro" id="IPR013020">
    <property type="entry name" value="Rad3/Chl1-like"/>
</dbReference>
<dbReference type="InterPro" id="IPR030845">
    <property type="entry name" value="RTEL1"/>
</dbReference>
<dbReference type="NCBIfam" id="TIGR00604">
    <property type="entry name" value="rad3"/>
    <property type="match status" value="1"/>
</dbReference>
<dbReference type="PANTHER" id="PTHR11472">
    <property type="entry name" value="DNA REPAIR DEAD HELICASE RAD3/XP-D SUBFAMILY MEMBER"/>
    <property type="match status" value="1"/>
</dbReference>
<dbReference type="PANTHER" id="PTHR11472:SF34">
    <property type="entry name" value="REGULATOR OF TELOMERE ELONGATION HELICASE 1"/>
    <property type="match status" value="1"/>
</dbReference>
<dbReference type="Pfam" id="PF23109">
    <property type="entry name" value="ARCH_RTEL1"/>
    <property type="match status" value="1"/>
</dbReference>
<dbReference type="Pfam" id="PF06733">
    <property type="entry name" value="DEAD_2"/>
    <property type="match status" value="1"/>
</dbReference>
<dbReference type="Pfam" id="PF13307">
    <property type="entry name" value="Helicase_C_2"/>
    <property type="match status" value="1"/>
</dbReference>
<dbReference type="SMART" id="SM00488">
    <property type="entry name" value="DEXDc2"/>
    <property type="match status" value="1"/>
</dbReference>
<dbReference type="SMART" id="SM00491">
    <property type="entry name" value="HELICc2"/>
    <property type="match status" value="1"/>
</dbReference>
<dbReference type="SUPFAM" id="SSF52540">
    <property type="entry name" value="P-loop containing nucleoside triphosphate hydrolases"/>
    <property type="match status" value="2"/>
</dbReference>
<dbReference type="PROSITE" id="PS51193">
    <property type="entry name" value="HELICASE_ATP_BIND_2"/>
    <property type="match status" value="1"/>
</dbReference>
<organism>
    <name type="scientific">Drosophila melanogaster</name>
    <name type="common">Fruit fly</name>
    <dbReference type="NCBI Taxonomy" id="7227"/>
    <lineage>
        <taxon>Eukaryota</taxon>
        <taxon>Metazoa</taxon>
        <taxon>Ecdysozoa</taxon>
        <taxon>Arthropoda</taxon>
        <taxon>Hexapoda</taxon>
        <taxon>Insecta</taxon>
        <taxon>Pterygota</taxon>
        <taxon>Neoptera</taxon>
        <taxon>Endopterygota</taxon>
        <taxon>Diptera</taxon>
        <taxon>Brachycera</taxon>
        <taxon>Muscomorpha</taxon>
        <taxon>Ephydroidea</taxon>
        <taxon>Drosophilidae</taxon>
        <taxon>Drosophila</taxon>
        <taxon>Sophophora</taxon>
    </lineage>
</organism>
<feature type="chain" id="PRO_0000370623" description="Regulator of telomere elongation helicase 1 homolog">
    <location>
        <begin position="1"/>
        <end position="985"/>
    </location>
</feature>
<feature type="domain" description="Helicase ATP-binding" evidence="1">
    <location>
        <begin position="7"/>
        <end position="303"/>
    </location>
</feature>
<feature type="region of interest" description="Disordered" evidence="2">
    <location>
        <begin position="863"/>
        <end position="883"/>
    </location>
</feature>
<feature type="short sequence motif" description="DEAH box">
    <location>
        <begin position="252"/>
        <end position="255"/>
    </location>
</feature>
<feature type="compositionally biased region" description="Polar residues" evidence="2">
    <location>
        <begin position="872"/>
        <end position="882"/>
    </location>
</feature>
<feature type="binding site" evidence="1">
    <location>
        <begin position="42"/>
        <end position="49"/>
    </location>
    <ligand>
        <name>ATP</name>
        <dbReference type="ChEBI" id="CHEBI:30616"/>
    </ligand>
</feature>
<feature type="binding site" evidence="1">
    <location>
        <position position="146"/>
    </location>
    <ligand>
        <name>[4Fe-4S] cluster</name>
        <dbReference type="ChEBI" id="CHEBI:49883"/>
    </ligand>
</feature>
<feature type="binding site" evidence="1">
    <location>
        <position position="164"/>
    </location>
    <ligand>
        <name>[4Fe-4S] cluster</name>
        <dbReference type="ChEBI" id="CHEBI:49883"/>
    </ligand>
</feature>
<feature type="binding site" evidence="1">
    <location>
        <position position="173"/>
    </location>
    <ligand>
        <name>[4Fe-4S] cluster</name>
        <dbReference type="ChEBI" id="CHEBI:49883"/>
    </ligand>
</feature>
<feature type="binding site" evidence="1">
    <location>
        <position position="209"/>
    </location>
    <ligand>
        <name>[4Fe-4S] cluster</name>
        <dbReference type="ChEBI" id="CHEBI:49883"/>
    </ligand>
</feature>
<feature type="modified residue" description="Phosphothreonine" evidence="4">
    <location>
        <position position="874"/>
    </location>
</feature>
<feature type="sequence variant" description="In strain: ZW104." evidence="3">
    <original>G</original>
    <variation>D</variation>
    <location>
        <position position="81"/>
    </location>
</feature>
<feature type="sequence variant" description="In strain: ZW141." evidence="3">
    <original>A</original>
    <variation>T</variation>
    <location>
        <position position="95"/>
    </location>
</feature>
<feature type="sequence variant" description="In strain: ZW104 and ZW141." evidence="3">
    <location>
        <position position="294"/>
    </location>
</feature>
<gene>
    <name evidence="6 7" type="primary">Rtel1</name>
    <name evidence="7" type="ORF">CG4078</name>
</gene>